<reference key="1">
    <citation type="journal article" date="2008" name="PLoS ONE">
        <title>Genome sequence of a lancefield group C Streptococcus zooepidemicus strain causing epidemic nephritis: new information about an old disease.</title>
        <authorList>
            <person name="Beres S.B."/>
            <person name="Sesso R."/>
            <person name="Pinto S.W.L."/>
            <person name="Hoe N.P."/>
            <person name="Porcella S.F."/>
            <person name="Deleo F.R."/>
            <person name="Musser J.M."/>
        </authorList>
    </citation>
    <scope>NUCLEOTIDE SEQUENCE [LARGE SCALE GENOMIC DNA]</scope>
    <source>
        <strain>MGCS10565</strain>
    </source>
</reference>
<proteinExistence type="inferred from homology"/>
<accession>B4U1A7</accession>
<sequence>MITERQSNILNLIVDLFTQTHEPVGSKALQSVIASSSATIRNDMAKLEKLGLLEKAHTSSGRMPSAAGFKYFVEHSLNLGSIDEQDFYQLVKAFDFEAFKLEDVLLRASQMLSDMTGYTAAILDVEPARQRLTGFDIVQLSSHDALAVLTLDESKPLTVQFAIPKNFMNRDLLVLKGIVADRLLGKDVMTVHYKLRTEIPQIVQKYFTVTDNVLDLFDYIFVGLFRETIFVSGKVAALDYAGLVTYQFLDEEQRLALSIRQSLSEEEMATVQVADSSEPALANVTLLTYKFLIPYRGFGLLSLIGPVDMDYRRSVSLINVIGQLLAVKLRDYYRYLNSNHYEVH</sequence>
<dbReference type="EMBL" id="CP001129">
    <property type="protein sequence ID" value="ACG61774.1"/>
    <property type="molecule type" value="Genomic_DNA"/>
</dbReference>
<dbReference type="RefSeq" id="WP_012515050.1">
    <property type="nucleotide sequence ID" value="NC_011134.1"/>
</dbReference>
<dbReference type="SMR" id="B4U1A7"/>
<dbReference type="KEGG" id="sez:Sez_0400"/>
<dbReference type="HOGENOM" id="CLU_050019_1_0_9"/>
<dbReference type="Proteomes" id="UP000001873">
    <property type="component" value="Chromosome"/>
</dbReference>
<dbReference type="GO" id="GO:0003677">
    <property type="term" value="F:DNA binding"/>
    <property type="evidence" value="ECO:0007669"/>
    <property type="project" value="InterPro"/>
</dbReference>
<dbReference type="GO" id="GO:0045892">
    <property type="term" value="P:negative regulation of DNA-templated transcription"/>
    <property type="evidence" value="ECO:0007669"/>
    <property type="project" value="UniProtKB-UniRule"/>
</dbReference>
<dbReference type="Gene3D" id="3.30.450.40">
    <property type="match status" value="1"/>
</dbReference>
<dbReference type="Gene3D" id="3.30.390.60">
    <property type="entry name" value="Heat-inducible transcription repressor hrca homolog, domain 3"/>
    <property type="match status" value="1"/>
</dbReference>
<dbReference type="Gene3D" id="1.10.10.10">
    <property type="entry name" value="Winged helix-like DNA-binding domain superfamily/Winged helix DNA-binding domain"/>
    <property type="match status" value="1"/>
</dbReference>
<dbReference type="HAMAP" id="MF_00081">
    <property type="entry name" value="HrcA"/>
    <property type="match status" value="1"/>
</dbReference>
<dbReference type="InterPro" id="IPR029016">
    <property type="entry name" value="GAF-like_dom_sf"/>
</dbReference>
<dbReference type="InterPro" id="IPR002571">
    <property type="entry name" value="HrcA"/>
</dbReference>
<dbReference type="InterPro" id="IPR021153">
    <property type="entry name" value="HrcA_C"/>
</dbReference>
<dbReference type="InterPro" id="IPR036388">
    <property type="entry name" value="WH-like_DNA-bd_sf"/>
</dbReference>
<dbReference type="InterPro" id="IPR036390">
    <property type="entry name" value="WH_DNA-bd_sf"/>
</dbReference>
<dbReference type="InterPro" id="IPR005104">
    <property type="entry name" value="WHTH_HrcA_DNA-bd"/>
</dbReference>
<dbReference type="InterPro" id="IPR023120">
    <property type="entry name" value="WHTH_transcript_rep_HrcA_IDD"/>
</dbReference>
<dbReference type="NCBIfam" id="TIGR00331">
    <property type="entry name" value="hrcA"/>
    <property type="match status" value="1"/>
</dbReference>
<dbReference type="PANTHER" id="PTHR34824">
    <property type="entry name" value="HEAT-INDUCIBLE TRANSCRIPTION REPRESSOR HRCA"/>
    <property type="match status" value="1"/>
</dbReference>
<dbReference type="PANTHER" id="PTHR34824:SF1">
    <property type="entry name" value="HEAT-INDUCIBLE TRANSCRIPTION REPRESSOR HRCA"/>
    <property type="match status" value="1"/>
</dbReference>
<dbReference type="Pfam" id="PF01628">
    <property type="entry name" value="HrcA"/>
    <property type="match status" value="1"/>
</dbReference>
<dbReference type="Pfam" id="PF03444">
    <property type="entry name" value="HrcA_DNA-bdg"/>
    <property type="match status" value="1"/>
</dbReference>
<dbReference type="PIRSF" id="PIRSF005485">
    <property type="entry name" value="HrcA"/>
    <property type="match status" value="1"/>
</dbReference>
<dbReference type="SUPFAM" id="SSF55781">
    <property type="entry name" value="GAF domain-like"/>
    <property type="match status" value="1"/>
</dbReference>
<dbReference type="SUPFAM" id="SSF46785">
    <property type="entry name" value="Winged helix' DNA-binding domain"/>
    <property type="match status" value="1"/>
</dbReference>
<feature type="chain" id="PRO_1000092830" description="Heat-inducible transcription repressor HrcA">
    <location>
        <begin position="1"/>
        <end position="344"/>
    </location>
</feature>
<keyword id="KW-0678">Repressor</keyword>
<keyword id="KW-0346">Stress response</keyword>
<keyword id="KW-0804">Transcription</keyword>
<keyword id="KW-0805">Transcription regulation</keyword>
<name>HRCA_STREM</name>
<gene>
    <name evidence="1" type="primary">hrcA</name>
    <name type="ordered locus">Sez_0400</name>
</gene>
<evidence type="ECO:0000255" key="1">
    <source>
        <dbReference type="HAMAP-Rule" id="MF_00081"/>
    </source>
</evidence>
<comment type="function">
    <text evidence="1">Negative regulator of class I heat shock genes (grpE-dnaK-dnaJ and groELS operons). Prevents heat-shock induction of these operons.</text>
</comment>
<comment type="similarity">
    <text evidence="1">Belongs to the HrcA family.</text>
</comment>
<organism>
    <name type="scientific">Streptococcus equi subsp. zooepidemicus (strain MGCS10565)</name>
    <dbReference type="NCBI Taxonomy" id="552526"/>
    <lineage>
        <taxon>Bacteria</taxon>
        <taxon>Bacillati</taxon>
        <taxon>Bacillota</taxon>
        <taxon>Bacilli</taxon>
        <taxon>Lactobacillales</taxon>
        <taxon>Streptococcaceae</taxon>
        <taxon>Streptococcus</taxon>
    </lineage>
</organism>
<protein>
    <recommendedName>
        <fullName evidence="1">Heat-inducible transcription repressor HrcA</fullName>
    </recommendedName>
</protein>